<dbReference type="EC" id="6.5.1.2" evidence="1"/>
<dbReference type="EMBL" id="CP000767">
    <property type="protein sequence ID" value="EAU00654.1"/>
    <property type="molecule type" value="Genomic_DNA"/>
</dbReference>
<dbReference type="RefSeq" id="WP_011992140.1">
    <property type="nucleotide sequence ID" value="NC_009715.2"/>
</dbReference>
<dbReference type="SMR" id="A7GXS4"/>
<dbReference type="STRING" id="360105.CCV52592_1565"/>
<dbReference type="KEGG" id="ccv:CCV52592_1565"/>
<dbReference type="HOGENOM" id="CLU_007764_2_0_7"/>
<dbReference type="OrthoDB" id="9759736at2"/>
<dbReference type="Proteomes" id="UP000006380">
    <property type="component" value="Chromosome"/>
</dbReference>
<dbReference type="GO" id="GO:0003677">
    <property type="term" value="F:DNA binding"/>
    <property type="evidence" value="ECO:0007669"/>
    <property type="project" value="InterPro"/>
</dbReference>
<dbReference type="GO" id="GO:0003911">
    <property type="term" value="F:DNA ligase (NAD+) activity"/>
    <property type="evidence" value="ECO:0007669"/>
    <property type="project" value="UniProtKB-UniRule"/>
</dbReference>
<dbReference type="GO" id="GO:0046872">
    <property type="term" value="F:metal ion binding"/>
    <property type="evidence" value="ECO:0007669"/>
    <property type="project" value="UniProtKB-KW"/>
</dbReference>
<dbReference type="GO" id="GO:0006281">
    <property type="term" value="P:DNA repair"/>
    <property type="evidence" value="ECO:0007669"/>
    <property type="project" value="UniProtKB-KW"/>
</dbReference>
<dbReference type="GO" id="GO:0006260">
    <property type="term" value="P:DNA replication"/>
    <property type="evidence" value="ECO:0007669"/>
    <property type="project" value="UniProtKB-KW"/>
</dbReference>
<dbReference type="CDD" id="cd17748">
    <property type="entry name" value="BRCT_DNA_ligase_like"/>
    <property type="match status" value="1"/>
</dbReference>
<dbReference type="CDD" id="cd00114">
    <property type="entry name" value="LIGANc"/>
    <property type="match status" value="1"/>
</dbReference>
<dbReference type="FunFam" id="1.10.150.20:FF:000007">
    <property type="entry name" value="DNA ligase"/>
    <property type="match status" value="1"/>
</dbReference>
<dbReference type="Gene3D" id="1.10.150.20">
    <property type="entry name" value="5' to 3' exonuclease, C-terminal subdomain"/>
    <property type="match status" value="2"/>
</dbReference>
<dbReference type="Gene3D" id="3.40.50.10190">
    <property type="entry name" value="BRCT domain"/>
    <property type="match status" value="1"/>
</dbReference>
<dbReference type="Gene3D" id="3.30.470.30">
    <property type="entry name" value="DNA ligase/mRNA capping enzyme"/>
    <property type="match status" value="1"/>
</dbReference>
<dbReference type="Gene3D" id="1.10.287.610">
    <property type="entry name" value="Helix hairpin bin"/>
    <property type="match status" value="1"/>
</dbReference>
<dbReference type="Gene3D" id="2.40.50.140">
    <property type="entry name" value="Nucleic acid-binding proteins"/>
    <property type="match status" value="1"/>
</dbReference>
<dbReference type="HAMAP" id="MF_01588">
    <property type="entry name" value="DNA_ligase_A"/>
    <property type="match status" value="1"/>
</dbReference>
<dbReference type="InterPro" id="IPR001357">
    <property type="entry name" value="BRCT_dom"/>
</dbReference>
<dbReference type="InterPro" id="IPR036420">
    <property type="entry name" value="BRCT_dom_sf"/>
</dbReference>
<dbReference type="InterPro" id="IPR041663">
    <property type="entry name" value="DisA/LigA_HHH"/>
</dbReference>
<dbReference type="InterPro" id="IPR001679">
    <property type="entry name" value="DNA_ligase"/>
</dbReference>
<dbReference type="InterPro" id="IPR018239">
    <property type="entry name" value="DNA_ligase_AS"/>
</dbReference>
<dbReference type="InterPro" id="IPR013839">
    <property type="entry name" value="DNAligase_adenylation"/>
</dbReference>
<dbReference type="InterPro" id="IPR013840">
    <property type="entry name" value="DNAligase_N"/>
</dbReference>
<dbReference type="InterPro" id="IPR003583">
    <property type="entry name" value="Hlx-hairpin-Hlx_DNA-bd_motif"/>
</dbReference>
<dbReference type="InterPro" id="IPR012340">
    <property type="entry name" value="NA-bd_OB-fold"/>
</dbReference>
<dbReference type="InterPro" id="IPR004150">
    <property type="entry name" value="NAD_DNA_ligase_OB"/>
</dbReference>
<dbReference type="InterPro" id="IPR010994">
    <property type="entry name" value="RuvA_2-like"/>
</dbReference>
<dbReference type="NCBIfam" id="TIGR00575">
    <property type="entry name" value="dnlj"/>
    <property type="match status" value="1"/>
</dbReference>
<dbReference type="NCBIfam" id="NF005932">
    <property type="entry name" value="PRK07956.1"/>
    <property type="match status" value="1"/>
</dbReference>
<dbReference type="Pfam" id="PF00533">
    <property type="entry name" value="BRCT"/>
    <property type="match status" value="1"/>
</dbReference>
<dbReference type="Pfam" id="PF01653">
    <property type="entry name" value="DNA_ligase_aden"/>
    <property type="match status" value="1"/>
</dbReference>
<dbReference type="Pfam" id="PF03120">
    <property type="entry name" value="DNA_ligase_OB"/>
    <property type="match status" value="1"/>
</dbReference>
<dbReference type="Pfam" id="PF12826">
    <property type="entry name" value="HHH_2"/>
    <property type="match status" value="1"/>
</dbReference>
<dbReference type="Pfam" id="PF14520">
    <property type="entry name" value="HHH_5"/>
    <property type="match status" value="1"/>
</dbReference>
<dbReference type="PIRSF" id="PIRSF001604">
    <property type="entry name" value="LigA"/>
    <property type="match status" value="1"/>
</dbReference>
<dbReference type="SMART" id="SM00292">
    <property type="entry name" value="BRCT"/>
    <property type="match status" value="1"/>
</dbReference>
<dbReference type="SMART" id="SM00278">
    <property type="entry name" value="HhH1"/>
    <property type="match status" value="3"/>
</dbReference>
<dbReference type="SMART" id="SM00532">
    <property type="entry name" value="LIGANc"/>
    <property type="match status" value="1"/>
</dbReference>
<dbReference type="SUPFAM" id="SSF52113">
    <property type="entry name" value="BRCT domain"/>
    <property type="match status" value="1"/>
</dbReference>
<dbReference type="SUPFAM" id="SSF56091">
    <property type="entry name" value="DNA ligase/mRNA capping enzyme, catalytic domain"/>
    <property type="match status" value="1"/>
</dbReference>
<dbReference type="SUPFAM" id="SSF50249">
    <property type="entry name" value="Nucleic acid-binding proteins"/>
    <property type="match status" value="1"/>
</dbReference>
<dbReference type="SUPFAM" id="SSF47781">
    <property type="entry name" value="RuvA domain 2-like"/>
    <property type="match status" value="1"/>
</dbReference>
<dbReference type="PROSITE" id="PS50172">
    <property type="entry name" value="BRCT"/>
    <property type="match status" value="1"/>
</dbReference>
<dbReference type="PROSITE" id="PS01055">
    <property type="entry name" value="DNA_LIGASE_N1"/>
    <property type="match status" value="1"/>
</dbReference>
<feature type="chain" id="PRO_0000340333" description="DNA ligase">
    <location>
        <begin position="1"/>
        <end position="654"/>
    </location>
</feature>
<feature type="domain" description="BRCT" evidence="1">
    <location>
        <begin position="576"/>
        <end position="654"/>
    </location>
</feature>
<feature type="active site" description="N6-AMP-lysine intermediate" evidence="1">
    <location>
        <position position="115"/>
    </location>
</feature>
<feature type="binding site" evidence="1">
    <location>
        <begin position="37"/>
        <end position="41"/>
    </location>
    <ligand>
        <name>NAD(+)</name>
        <dbReference type="ChEBI" id="CHEBI:57540"/>
    </ligand>
</feature>
<feature type="binding site" evidence="1">
    <location>
        <begin position="86"/>
        <end position="87"/>
    </location>
    <ligand>
        <name>NAD(+)</name>
        <dbReference type="ChEBI" id="CHEBI:57540"/>
    </ligand>
</feature>
<feature type="binding site" evidence="1">
    <location>
        <position position="113"/>
    </location>
    <ligand>
        <name>NAD(+)</name>
        <dbReference type="ChEBI" id="CHEBI:57540"/>
    </ligand>
</feature>
<feature type="binding site" evidence="1">
    <location>
        <position position="136"/>
    </location>
    <ligand>
        <name>NAD(+)</name>
        <dbReference type="ChEBI" id="CHEBI:57540"/>
    </ligand>
</feature>
<feature type="binding site" evidence="1">
    <location>
        <position position="170"/>
    </location>
    <ligand>
        <name>NAD(+)</name>
        <dbReference type="ChEBI" id="CHEBI:57540"/>
    </ligand>
</feature>
<feature type="binding site" evidence="1">
    <location>
        <position position="308"/>
    </location>
    <ligand>
        <name>NAD(+)</name>
        <dbReference type="ChEBI" id="CHEBI:57540"/>
    </ligand>
</feature>
<feature type="binding site" evidence="1">
    <location>
        <position position="402"/>
    </location>
    <ligand>
        <name>Zn(2+)</name>
        <dbReference type="ChEBI" id="CHEBI:29105"/>
    </ligand>
</feature>
<feature type="binding site" evidence="1">
    <location>
        <position position="405"/>
    </location>
    <ligand>
        <name>Zn(2+)</name>
        <dbReference type="ChEBI" id="CHEBI:29105"/>
    </ligand>
</feature>
<feature type="binding site" evidence="1">
    <location>
        <position position="418"/>
    </location>
    <ligand>
        <name>Zn(2+)</name>
        <dbReference type="ChEBI" id="CHEBI:29105"/>
    </ligand>
</feature>
<feature type="binding site" evidence="1">
    <location>
        <position position="423"/>
    </location>
    <ligand>
        <name>Zn(2+)</name>
        <dbReference type="ChEBI" id="CHEBI:29105"/>
    </ligand>
</feature>
<name>DNLJ_CAMC5</name>
<protein>
    <recommendedName>
        <fullName evidence="1">DNA ligase</fullName>
        <ecNumber evidence="1">6.5.1.2</ecNumber>
    </recommendedName>
    <alternativeName>
        <fullName evidence="1">Polydeoxyribonucleotide synthase [NAD(+)]</fullName>
    </alternativeName>
</protein>
<reference key="1">
    <citation type="submission" date="2007-07" db="EMBL/GenBank/DDBJ databases">
        <title>Genome sequence of Campylobacter curvus 525.92 isolated from human feces.</title>
        <authorList>
            <person name="Fouts D.E."/>
            <person name="Mongodin E.F."/>
            <person name="Puiu D."/>
            <person name="Sebastian Y."/>
            <person name="Miller W.G."/>
            <person name="Mandrell R.E."/>
            <person name="Lastovica A.J."/>
            <person name="Nelson K.E."/>
        </authorList>
    </citation>
    <scope>NUCLEOTIDE SEQUENCE [LARGE SCALE GENOMIC DNA]</scope>
    <source>
        <strain>525.92</strain>
    </source>
</reference>
<comment type="function">
    <text evidence="1">DNA ligase that catalyzes the formation of phosphodiester linkages between 5'-phosphoryl and 3'-hydroxyl groups in double-stranded DNA using NAD as a coenzyme and as the energy source for the reaction. It is essential for DNA replication and repair of damaged DNA.</text>
</comment>
<comment type="catalytic activity">
    <reaction evidence="1">
        <text>NAD(+) + (deoxyribonucleotide)n-3'-hydroxyl + 5'-phospho-(deoxyribonucleotide)m = (deoxyribonucleotide)n+m + AMP + beta-nicotinamide D-nucleotide.</text>
        <dbReference type="EC" id="6.5.1.2"/>
    </reaction>
</comment>
<comment type="cofactor">
    <cofactor evidence="1">
        <name>Mg(2+)</name>
        <dbReference type="ChEBI" id="CHEBI:18420"/>
    </cofactor>
    <cofactor evidence="1">
        <name>Mn(2+)</name>
        <dbReference type="ChEBI" id="CHEBI:29035"/>
    </cofactor>
</comment>
<comment type="similarity">
    <text evidence="1">Belongs to the NAD-dependent DNA ligase family. LigA subfamily.</text>
</comment>
<evidence type="ECO:0000255" key="1">
    <source>
        <dbReference type="HAMAP-Rule" id="MF_01588"/>
    </source>
</evidence>
<sequence length="654" mass="72773">MENFMRIDSKESYENAVATLNAWAKAYYDDDAPIASDEEYDALYHEVLAYEQVNPAQKSLFSPTTRIGGGVSEGFSKARHIKQMWSMEDIFSQLELVAWLKRGEKQNLSFVAEPKFDGASLNLLYEKGMLVRAITRGDGITGEEVTQNARVIKSIPLNISYDGRIEIRGEVVIKKADFDAINEERTRNGETLLSNPRNAAAGSLRQLDSAVTAKRKLLFIPWGVGEQNLGLAKHSEVMKFVRDLGFYRDDFFKILDADGLAGAYNELLKQRDEKDVMMDGMVIRVDDLARCEELGYTVKFPKFMVAFKFPAIEKTTRLLDVALQVGRSGVVTPVGVLDEVVIDGARVKSATLHNFDEIERLGVMKNDLISIIRSGDVIPKITSVFKERRDGTQTPIIRPKFCPECGSHLLDEGVFIKCQNLNCRARVINSIIHYASKKCLNIDGLGEAIINLLYEKGLISRVIDIYSLKFEDLMALEGFKDKKAQNLLDAIEASKGASLARFITGLGCEHIGEVAAKKIAQNFGEGWLEADFDEVKNLEGFGEEMANSLMDFIEVNKDEILALQSIVRPSFERKQITQNAFSGKSVVITGTLSRPRDEIKAELEGYGAKVVGSVSKKTDFVLAGSNAGSKLQKAVELGVRVIDEGEFERLKLEI</sequence>
<proteinExistence type="inferred from homology"/>
<keyword id="KW-0227">DNA damage</keyword>
<keyword id="KW-0234">DNA repair</keyword>
<keyword id="KW-0235">DNA replication</keyword>
<keyword id="KW-0436">Ligase</keyword>
<keyword id="KW-0460">Magnesium</keyword>
<keyword id="KW-0464">Manganese</keyword>
<keyword id="KW-0479">Metal-binding</keyword>
<keyword id="KW-0520">NAD</keyword>
<keyword id="KW-1185">Reference proteome</keyword>
<keyword id="KW-0862">Zinc</keyword>
<gene>
    <name evidence="1" type="primary">ligA</name>
    <name type="ordered locus">Ccur92_07120</name>
    <name type="ORF">CCV52592_1565</name>
</gene>
<organism>
    <name type="scientific">Campylobacter curvus (strain 525.92)</name>
    <dbReference type="NCBI Taxonomy" id="360105"/>
    <lineage>
        <taxon>Bacteria</taxon>
        <taxon>Pseudomonadati</taxon>
        <taxon>Campylobacterota</taxon>
        <taxon>Epsilonproteobacteria</taxon>
        <taxon>Campylobacterales</taxon>
        <taxon>Campylobacteraceae</taxon>
        <taxon>Campylobacter</taxon>
    </lineage>
</organism>
<accession>A7GXS4</accession>